<sequence>MALLHSGRVLPGIAAAFHPGLAAAASARASSWWTHVEMGPPDPILGVTEAFKRDTNSKKMNLGVGAYRDDNGKPYVLPSVRKAEAQIAAKNLDKEYLPIGGLAEFCKASAELALGENSEVLKSGRFVTVQTISGTGALRIGASFLQRFFKFSRDVFLPKPTWGNHTPIFRDAGMQLQGYRYYDPKTCGFDFTGAVEDISKIPEQSVLLLHACAHNPTGVDPRPEQWKEIATVVKKRNLFAFFDMAYQGFASGDGDKDAWAVRHFIEQGINVCLCQSYAKNMGLYGERVGAFTMVCKDADEAKRVESQLKILIRPMYSNPPLNGARIAAAILNTPDLRKQWLQEVKVMADRIIGMRTQLVSNLKKEGSTHNWQHITDQIGMFCFTGLKPEQVERLIKEFSIYMTKDGRISVAGVTSSNVGYLAHAIHQVTK</sequence>
<reference key="1">
    <citation type="journal article" date="1988" name="Biochem. Biophys. Res. Commun.">
        <title>Nucleotide sequence and tissue distribution of the human mitochondrial aspartate aminotransferase mRNA.</title>
        <authorList>
            <person name="Pol S."/>
            <person name="Bousquet-Lemercier B."/>
            <person name="Pave-Preux M."/>
            <person name="Pawlak A."/>
            <person name="Nalpas B."/>
            <person name="Berthelot P."/>
            <person name="Hanoune J."/>
            <person name="Barouki R."/>
        </authorList>
    </citation>
    <scope>NUCLEOTIDE SEQUENCE [MRNA] (ISOFORM 1)</scope>
    <scope>VARIANT GLY-346</scope>
</reference>
<reference key="2">
    <citation type="journal article" date="2004" name="Nat. Genet.">
        <title>Complete sequencing and characterization of 21,243 full-length human cDNAs.</title>
        <authorList>
            <person name="Ota T."/>
            <person name="Suzuki Y."/>
            <person name="Nishikawa T."/>
            <person name="Otsuki T."/>
            <person name="Sugiyama T."/>
            <person name="Irie R."/>
            <person name="Wakamatsu A."/>
            <person name="Hayashi K."/>
            <person name="Sato H."/>
            <person name="Nagai K."/>
            <person name="Kimura K."/>
            <person name="Makita H."/>
            <person name="Sekine M."/>
            <person name="Obayashi M."/>
            <person name="Nishi T."/>
            <person name="Shibahara T."/>
            <person name="Tanaka T."/>
            <person name="Ishii S."/>
            <person name="Yamamoto J."/>
            <person name="Saito K."/>
            <person name="Kawai Y."/>
            <person name="Isono Y."/>
            <person name="Nakamura Y."/>
            <person name="Nagahari K."/>
            <person name="Murakami K."/>
            <person name="Yasuda T."/>
            <person name="Iwayanagi T."/>
            <person name="Wagatsuma M."/>
            <person name="Shiratori A."/>
            <person name="Sudo H."/>
            <person name="Hosoiri T."/>
            <person name="Kaku Y."/>
            <person name="Kodaira H."/>
            <person name="Kondo H."/>
            <person name="Sugawara M."/>
            <person name="Takahashi M."/>
            <person name="Kanda K."/>
            <person name="Yokoi T."/>
            <person name="Furuya T."/>
            <person name="Kikkawa E."/>
            <person name="Omura Y."/>
            <person name="Abe K."/>
            <person name="Kamihara K."/>
            <person name="Katsuta N."/>
            <person name="Sato K."/>
            <person name="Tanikawa M."/>
            <person name="Yamazaki M."/>
            <person name="Ninomiya K."/>
            <person name="Ishibashi T."/>
            <person name="Yamashita H."/>
            <person name="Murakawa K."/>
            <person name="Fujimori K."/>
            <person name="Tanai H."/>
            <person name="Kimata M."/>
            <person name="Watanabe M."/>
            <person name="Hiraoka S."/>
            <person name="Chiba Y."/>
            <person name="Ishida S."/>
            <person name="Ono Y."/>
            <person name="Takiguchi S."/>
            <person name="Watanabe S."/>
            <person name="Yosida M."/>
            <person name="Hotuta T."/>
            <person name="Kusano J."/>
            <person name="Kanehori K."/>
            <person name="Takahashi-Fujii A."/>
            <person name="Hara H."/>
            <person name="Tanase T.-O."/>
            <person name="Nomura Y."/>
            <person name="Togiya S."/>
            <person name="Komai F."/>
            <person name="Hara R."/>
            <person name="Takeuchi K."/>
            <person name="Arita M."/>
            <person name="Imose N."/>
            <person name="Musashino K."/>
            <person name="Yuuki H."/>
            <person name="Oshima A."/>
            <person name="Sasaki N."/>
            <person name="Aotsuka S."/>
            <person name="Yoshikawa Y."/>
            <person name="Matsunawa H."/>
            <person name="Ichihara T."/>
            <person name="Shiohata N."/>
            <person name="Sano S."/>
            <person name="Moriya S."/>
            <person name="Momiyama H."/>
            <person name="Satoh N."/>
            <person name="Takami S."/>
            <person name="Terashima Y."/>
            <person name="Suzuki O."/>
            <person name="Nakagawa S."/>
            <person name="Senoh A."/>
            <person name="Mizoguchi H."/>
            <person name="Goto Y."/>
            <person name="Shimizu F."/>
            <person name="Wakebe H."/>
            <person name="Hishigaki H."/>
            <person name="Watanabe T."/>
            <person name="Sugiyama A."/>
            <person name="Takemoto M."/>
            <person name="Kawakami B."/>
            <person name="Yamazaki M."/>
            <person name="Watanabe K."/>
            <person name="Kumagai A."/>
            <person name="Itakura S."/>
            <person name="Fukuzumi Y."/>
            <person name="Fujimori Y."/>
            <person name="Komiyama M."/>
            <person name="Tashiro H."/>
            <person name="Tanigami A."/>
            <person name="Fujiwara T."/>
            <person name="Ono T."/>
            <person name="Yamada K."/>
            <person name="Fujii Y."/>
            <person name="Ozaki K."/>
            <person name="Hirao M."/>
            <person name="Ohmori Y."/>
            <person name="Kawabata A."/>
            <person name="Hikiji T."/>
            <person name="Kobatake N."/>
            <person name="Inagaki H."/>
            <person name="Ikema Y."/>
            <person name="Okamoto S."/>
            <person name="Okitani R."/>
            <person name="Kawakami T."/>
            <person name="Noguchi S."/>
            <person name="Itoh T."/>
            <person name="Shigeta K."/>
            <person name="Senba T."/>
            <person name="Matsumura K."/>
            <person name="Nakajima Y."/>
            <person name="Mizuno T."/>
            <person name="Morinaga M."/>
            <person name="Sasaki M."/>
            <person name="Togashi T."/>
            <person name="Oyama M."/>
            <person name="Hata H."/>
            <person name="Watanabe M."/>
            <person name="Komatsu T."/>
            <person name="Mizushima-Sugano J."/>
            <person name="Satoh T."/>
            <person name="Shirai Y."/>
            <person name="Takahashi Y."/>
            <person name="Nakagawa K."/>
            <person name="Okumura K."/>
            <person name="Nagase T."/>
            <person name="Nomura N."/>
            <person name="Kikuchi H."/>
            <person name="Masuho Y."/>
            <person name="Yamashita R."/>
            <person name="Nakai K."/>
            <person name="Yada T."/>
            <person name="Nakamura Y."/>
            <person name="Ohara O."/>
            <person name="Isogai T."/>
            <person name="Sugano S."/>
        </authorList>
    </citation>
    <scope>NUCLEOTIDE SEQUENCE [LARGE SCALE MRNA] (ISOFORM 2)</scope>
    <scope>VARIANT GLY-346</scope>
    <source>
        <tissue>Subthalamic nucleus</tissue>
    </source>
</reference>
<reference key="3">
    <citation type="submission" date="2005-04" db="EMBL/GenBank/DDBJ databases">
        <authorList>
            <person name="Suzuki Y."/>
            <person name="Sugano S."/>
            <person name="Totoki Y."/>
            <person name="Toyoda A."/>
            <person name="Takeda T."/>
            <person name="Sakaki Y."/>
            <person name="Tanaka A."/>
            <person name="Yokoyama S."/>
        </authorList>
    </citation>
    <scope>NUCLEOTIDE SEQUENCE [LARGE SCALE MRNA] (ISOFORM 1)</scope>
    <source>
        <tissue>Gastric mucosa</tissue>
    </source>
</reference>
<reference key="4">
    <citation type="journal article" date="2004" name="Nature">
        <title>The sequence and analysis of duplication-rich human chromosome 16.</title>
        <authorList>
            <person name="Martin J."/>
            <person name="Han C."/>
            <person name="Gordon L.A."/>
            <person name="Terry A."/>
            <person name="Prabhakar S."/>
            <person name="She X."/>
            <person name="Xie G."/>
            <person name="Hellsten U."/>
            <person name="Chan Y.M."/>
            <person name="Altherr M."/>
            <person name="Couronne O."/>
            <person name="Aerts A."/>
            <person name="Bajorek E."/>
            <person name="Black S."/>
            <person name="Blumer H."/>
            <person name="Branscomb E."/>
            <person name="Brown N.C."/>
            <person name="Bruno W.J."/>
            <person name="Buckingham J.M."/>
            <person name="Callen D.F."/>
            <person name="Campbell C.S."/>
            <person name="Campbell M.L."/>
            <person name="Campbell E.W."/>
            <person name="Caoile C."/>
            <person name="Challacombe J.F."/>
            <person name="Chasteen L.A."/>
            <person name="Chertkov O."/>
            <person name="Chi H.C."/>
            <person name="Christensen M."/>
            <person name="Clark L.M."/>
            <person name="Cohn J.D."/>
            <person name="Denys M."/>
            <person name="Detter J.C."/>
            <person name="Dickson M."/>
            <person name="Dimitrijevic-Bussod M."/>
            <person name="Escobar J."/>
            <person name="Fawcett J.J."/>
            <person name="Flowers D."/>
            <person name="Fotopulos D."/>
            <person name="Glavina T."/>
            <person name="Gomez M."/>
            <person name="Gonzales E."/>
            <person name="Goodstein D."/>
            <person name="Goodwin L.A."/>
            <person name="Grady D.L."/>
            <person name="Grigoriev I."/>
            <person name="Groza M."/>
            <person name="Hammon N."/>
            <person name="Hawkins T."/>
            <person name="Haydu L."/>
            <person name="Hildebrand C.E."/>
            <person name="Huang W."/>
            <person name="Israni S."/>
            <person name="Jett J."/>
            <person name="Jewett P.B."/>
            <person name="Kadner K."/>
            <person name="Kimball H."/>
            <person name="Kobayashi A."/>
            <person name="Krawczyk M.-C."/>
            <person name="Leyba T."/>
            <person name="Longmire J.L."/>
            <person name="Lopez F."/>
            <person name="Lou Y."/>
            <person name="Lowry S."/>
            <person name="Ludeman T."/>
            <person name="Manohar C.F."/>
            <person name="Mark G.A."/>
            <person name="McMurray K.L."/>
            <person name="Meincke L.J."/>
            <person name="Morgan J."/>
            <person name="Moyzis R.K."/>
            <person name="Mundt M.O."/>
            <person name="Munk A.C."/>
            <person name="Nandkeshwar R.D."/>
            <person name="Pitluck S."/>
            <person name="Pollard M."/>
            <person name="Predki P."/>
            <person name="Parson-Quintana B."/>
            <person name="Ramirez L."/>
            <person name="Rash S."/>
            <person name="Retterer J."/>
            <person name="Ricke D.O."/>
            <person name="Robinson D.L."/>
            <person name="Rodriguez A."/>
            <person name="Salamov A."/>
            <person name="Saunders E.H."/>
            <person name="Scott D."/>
            <person name="Shough T."/>
            <person name="Stallings R.L."/>
            <person name="Stalvey M."/>
            <person name="Sutherland R.D."/>
            <person name="Tapia R."/>
            <person name="Tesmer J.G."/>
            <person name="Thayer N."/>
            <person name="Thompson L.S."/>
            <person name="Tice H."/>
            <person name="Torney D.C."/>
            <person name="Tran-Gyamfi M."/>
            <person name="Tsai M."/>
            <person name="Ulanovsky L.E."/>
            <person name="Ustaszewska A."/>
            <person name="Vo N."/>
            <person name="White P.S."/>
            <person name="Williams A.L."/>
            <person name="Wills P.L."/>
            <person name="Wu J.-R."/>
            <person name="Wu K."/>
            <person name="Yang J."/>
            <person name="DeJong P."/>
            <person name="Bruce D."/>
            <person name="Doggett N.A."/>
            <person name="Deaven L."/>
            <person name="Schmutz J."/>
            <person name="Grimwood J."/>
            <person name="Richardson P."/>
            <person name="Rokhsar D.S."/>
            <person name="Eichler E.E."/>
            <person name="Gilna P."/>
            <person name="Lucas S.M."/>
            <person name="Myers R.M."/>
            <person name="Rubin E.M."/>
            <person name="Pennacchio L.A."/>
        </authorList>
    </citation>
    <scope>NUCLEOTIDE SEQUENCE [LARGE SCALE GENOMIC DNA]</scope>
</reference>
<reference key="5">
    <citation type="journal article" date="2004" name="Genome Res.">
        <title>The status, quality, and expansion of the NIH full-length cDNA project: the Mammalian Gene Collection (MGC).</title>
        <authorList>
            <consortium name="The MGC Project Team"/>
        </authorList>
    </citation>
    <scope>NUCLEOTIDE SEQUENCE [LARGE SCALE MRNA] (ISOFORM 1)</scope>
    <scope>VARIANT ALA-428</scope>
    <source>
        <tissue>Muscle</tissue>
    </source>
</reference>
<reference key="6">
    <citation type="journal article" date="1985" name="Biochim. Biophys. Acta">
        <title>The primary structure of mitochondrial aspartate aminotransferase from human heart.</title>
        <authorList>
            <person name="Martini F."/>
            <person name="Angelaccio S."/>
            <person name="Barra D."/>
            <person name="Pascarella S."/>
            <person name="Maras B."/>
            <person name="Doonan S."/>
            <person name="Bossa F."/>
        </authorList>
    </citation>
    <scope>PROTEIN SEQUENCE OF 30-430</scope>
    <scope>VARIANT GLY-346</scope>
</reference>
<reference key="7">
    <citation type="journal article" date="1998" name="Hepatology">
        <title>Ethanol up-regulates fatty acid uptake and plasma membrane expression and export of mitochondrial aspartate aminotransferase in HepG2 cells.</title>
        <authorList>
            <person name="Zhou S.L."/>
            <person name="Gordon R.E."/>
            <person name="Bradbury M."/>
            <person name="Stump D."/>
            <person name="Kiang C.L."/>
            <person name="Berk P.D."/>
        </authorList>
    </citation>
    <scope>FUNCTION</scope>
    <scope>INDUCTION</scope>
    <scope>SUBCELLULAR LOCATION</scope>
</reference>
<reference key="8">
    <citation type="journal article" date="2009" name="Science">
        <title>Lysine acetylation targets protein complexes and co-regulates major cellular functions.</title>
        <authorList>
            <person name="Choudhary C."/>
            <person name="Kumar C."/>
            <person name="Gnad F."/>
            <person name="Nielsen M.L."/>
            <person name="Rehman M."/>
            <person name="Walther T.C."/>
            <person name="Olsen J.V."/>
            <person name="Mann M."/>
        </authorList>
    </citation>
    <scope>ACETYLATION [LARGE SCALE ANALYSIS] AT LYS-73; LYS-90; LYS-159; LYS-234; LYS-296; LYS-396 AND LYS-404</scope>
    <scope>IDENTIFICATION BY MASS SPECTROMETRY [LARGE SCALE ANALYSIS]</scope>
</reference>
<reference key="9">
    <citation type="journal article" date="2011" name="BMC Syst. Biol.">
        <title>Initial characterization of the human central proteome.</title>
        <authorList>
            <person name="Burkard T.R."/>
            <person name="Planyavsky M."/>
            <person name="Kaupe I."/>
            <person name="Breitwieser F.P."/>
            <person name="Buerckstuemmer T."/>
            <person name="Bennett K.L."/>
            <person name="Superti-Furga G."/>
            <person name="Colinge J."/>
        </authorList>
    </citation>
    <scope>IDENTIFICATION BY MASS SPECTROMETRY [LARGE SCALE ANALYSIS]</scope>
</reference>
<reference key="10">
    <citation type="journal article" date="2013" name="J. Proteome Res.">
        <title>Toward a comprehensive characterization of a human cancer cell phosphoproteome.</title>
        <authorList>
            <person name="Zhou H."/>
            <person name="Di Palma S."/>
            <person name="Preisinger C."/>
            <person name="Peng M."/>
            <person name="Polat A.N."/>
            <person name="Heck A.J."/>
            <person name="Mohammed S."/>
        </authorList>
    </citation>
    <scope>PHOSPHORYLATION [LARGE SCALE ANALYSIS] AT SER-143 AND THR-333</scope>
    <scope>IDENTIFICATION BY MASS SPECTROMETRY [LARGE SCALE ANALYSIS]</scope>
    <source>
        <tissue>Erythroleukemia</tissue>
    </source>
</reference>
<reference key="11">
    <citation type="journal article" date="2014" name="J. Proteomics">
        <title>An enzyme assisted RP-RPLC approach for in-depth analysis of human liver phosphoproteome.</title>
        <authorList>
            <person name="Bian Y."/>
            <person name="Song C."/>
            <person name="Cheng K."/>
            <person name="Dong M."/>
            <person name="Wang F."/>
            <person name="Huang J."/>
            <person name="Sun D."/>
            <person name="Wang L."/>
            <person name="Ye M."/>
            <person name="Zou H."/>
        </authorList>
    </citation>
    <scope>PHOSPHORYLATION [LARGE SCALE ANALYSIS] AT THR-48; TYR-96; SER-143 AND THR-333</scope>
    <scope>IDENTIFICATION BY MASS SPECTROMETRY [LARGE SCALE ANALYSIS]</scope>
    <source>
        <tissue>Liver</tissue>
    </source>
</reference>
<reference key="12">
    <citation type="journal article" date="2015" name="Proteomics">
        <title>N-terminome analysis of the human mitochondrial proteome.</title>
        <authorList>
            <person name="Vaca Jacome A.S."/>
            <person name="Rabilloud T."/>
            <person name="Schaeffer-Reiss C."/>
            <person name="Rompais M."/>
            <person name="Ayoub D."/>
            <person name="Lane L."/>
            <person name="Bairoch A."/>
            <person name="Van Dorsselaer A."/>
            <person name="Carapito C."/>
        </authorList>
    </citation>
    <scope>CLEAVAGE OF TRANSIT PEPTIDE [LARGE SCALE ANALYSIS] AFTER ALA-29</scope>
    <scope>IDENTIFICATION BY MASS SPECTROMETRY [LARGE SCALE ANALYSIS]</scope>
</reference>
<reference key="13">
    <citation type="journal article" date="2019" name="Am. J. Hum. Genet.">
        <title>Bi-allelic GOT2 mutations cause a treatable malate-aspartate shuttle-related encephalopathy.</title>
        <authorList>
            <person name="van Karnebeek C.D.M."/>
            <person name="Ramos R.J."/>
            <person name="Wen X.Y."/>
            <person name="Tarailo-Graovac M."/>
            <person name="Gleeson J.G."/>
            <person name="Skrypnyk C."/>
            <person name="Brand-Arzamendi K."/>
            <person name="Karbassi F."/>
            <person name="Issa M.Y."/>
            <person name="van der Lee R."/>
            <person name="Droegemoeller B.I."/>
            <person name="Koster J."/>
            <person name="Rousseau J."/>
            <person name="Campeau P.M."/>
            <person name="Wang Y."/>
            <person name="Cao F."/>
            <person name="Li M."/>
            <person name="Ruiter J."/>
            <person name="Ciapaite J."/>
            <person name="Kluijtmans L.A.J."/>
            <person name="Willemsen M.A.A.P."/>
            <person name="Jans J.J."/>
            <person name="Ross C.J."/>
            <person name="Wintjes L.T."/>
            <person name="Rodenburg R.J."/>
            <person name="Huigen M.C.D.G."/>
            <person name="Jia Z."/>
            <person name="Waterham H.R."/>
            <person name="Wasserman W.W."/>
            <person name="Wanders R.J.A."/>
            <person name="Verhoeven-Duif N.M."/>
            <person name="Zaki M.S."/>
            <person name="Wevers R.A."/>
        </authorList>
    </citation>
    <scope>FUNCTION</scope>
    <scope>CATALYTIC ACTIVITY</scope>
    <scope>INVOLVEMENT IN DEE82</scope>
    <scope>VARIANTS DEE82 LEU-209 DEL; GLY-262; GLY-337 AND VAL-366</scope>
    <scope>CHARACTERIZATION OF VARIANTS DEE82 GLY-262 AND VAL-366</scope>
</reference>
<reference evidence="15" key="14">
    <citation type="journal article" date="2016" name="Biosci. Trends">
        <title>Recombinant expression, purification and crystallographic studies of the mature form of human mitochondrial aspartate aminotransferase.</title>
        <authorList>
            <person name="Jiang X."/>
            <person name="Wang J."/>
            <person name="Chang H."/>
            <person name="Zhou Y."/>
        </authorList>
    </citation>
    <scope>X-RAY CRYSTALLOGRAPHY (2.99 ANGSTROMS) OF 30-430</scope>
    <scope>BIOPHYSICOCHEMICAL PROPERTIES</scope>
    <scope>CATALYTIC ACTIVITY</scope>
</reference>
<feature type="transit peptide" description="Mitochondrion" evidence="10 19">
    <location>
        <begin position="1"/>
        <end position="29"/>
    </location>
</feature>
<feature type="chain" id="PRO_0000001215" description="Aspartate aminotransferase, mitochondrial">
    <location>
        <begin position="30"/>
        <end position="430"/>
    </location>
</feature>
<feature type="binding site" evidence="1">
    <location>
        <position position="65"/>
    </location>
    <ligand>
        <name>substrate</name>
    </ligand>
</feature>
<feature type="binding site" evidence="1">
    <location>
        <position position="162"/>
    </location>
    <ligand>
        <name>substrate</name>
    </ligand>
</feature>
<feature type="binding site" evidence="1">
    <location>
        <position position="215"/>
    </location>
    <ligand>
        <name>substrate</name>
    </ligand>
</feature>
<feature type="binding site" evidence="1">
    <location>
        <position position="407"/>
    </location>
    <ligand>
        <name>substrate</name>
    </ligand>
</feature>
<feature type="modified residue" description="Phosphothreonine" evidence="18">
    <location>
        <position position="48"/>
    </location>
</feature>
<feature type="modified residue" description="N6-acetyllysine" evidence="3">
    <location>
        <position position="59"/>
    </location>
</feature>
<feature type="modified residue" description="N6-acetyllysine; alternate" evidence="16">
    <location>
        <position position="73"/>
    </location>
</feature>
<feature type="modified residue" description="N6-succinyllysine; alternate" evidence="3">
    <location>
        <position position="73"/>
    </location>
</feature>
<feature type="modified residue" description="N6-acetyllysine" evidence="3">
    <location>
        <position position="82"/>
    </location>
</feature>
<feature type="modified residue" description="N6-acetyllysine; alternate" evidence="16">
    <location>
        <position position="90"/>
    </location>
</feature>
<feature type="modified residue" description="N6-succinyllysine; alternate" evidence="3">
    <location>
        <position position="90"/>
    </location>
</feature>
<feature type="modified residue" description="3'-nitrotyrosine; alternate" evidence="3">
    <location>
        <position position="96"/>
    </location>
</feature>
<feature type="modified residue" description="Phosphotyrosine; alternate" evidence="18">
    <location>
        <position position="96"/>
    </location>
</feature>
<feature type="modified residue" description="N6-acetyllysine; alternate" evidence="3">
    <location>
        <position position="107"/>
    </location>
</feature>
<feature type="modified residue" description="N6-succinyllysine; alternate" evidence="3">
    <location>
        <position position="107"/>
    </location>
</feature>
<feature type="modified residue" description="N6-acetyllysine; alternate" evidence="3">
    <location>
        <position position="122"/>
    </location>
</feature>
<feature type="modified residue" description="N6-succinyllysine; alternate" evidence="3">
    <location>
        <position position="122"/>
    </location>
</feature>
<feature type="modified residue" description="Phosphoserine" evidence="17 18">
    <location>
        <position position="143"/>
    </location>
</feature>
<feature type="modified residue" description="N6-acetyllysine; alternate" evidence="16">
    <location>
        <position position="159"/>
    </location>
</feature>
<feature type="modified residue" description="N6-succinyllysine; alternate" evidence="3">
    <location>
        <position position="159"/>
    </location>
</feature>
<feature type="modified residue" description="N6-acetyllysine; alternate" evidence="3">
    <location>
        <position position="185"/>
    </location>
</feature>
<feature type="modified residue" description="N6-succinyllysine; alternate" evidence="3">
    <location>
        <position position="185"/>
    </location>
</feature>
<feature type="modified residue" description="N6-succinyllysine" evidence="3">
    <location>
        <position position="227"/>
    </location>
</feature>
<feature type="modified residue" description="N6-acetyllysine" evidence="16">
    <location>
        <position position="234"/>
    </location>
</feature>
<feature type="modified residue" description="N6-(pyridoxal phosphate)lysine; alternate" evidence="1">
    <location>
        <position position="279"/>
    </location>
</feature>
<feature type="modified residue" description="N6-acetyllysine; alternate" evidence="3">
    <location>
        <position position="279"/>
    </location>
</feature>
<feature type="modified residue" description="N6-acetyllysine; alternate" evidence="16">
    <location>
        <position position="296"/>
    </location>
</feature>
<feature type="modified residue" description="N6-succinyllysine; alternate" evidence="3">
    <location>
        <position position="296"/>
    </location>
</feature>
<feature type="modified residue" description="N6-acetyllysine" evidence="3">
    <location>
        <position position="302"/>
    </location>
</feature>
<feature type="modified residue" description="N6-acetyllysine; alternate" evidence="3">
    <location>
        <position position="309"/>
    </location>
</feature>
<feature type="modified residue" description="N6-succinyllysine; alternate" evidence="4">
    <location>
        <position position="309"/>
    </location>
</feature>
<feature type="modified residue" description="Asymmetric dimethylarginine" evidence="3">
    <location>
        <position position="313"/>
    </location>
</feature>
<feature type="modified residue" description="Phosphothreonine" evidence="17 18">
    <location>
        <position position="333"/>
    </location>
</feature>
<feature type="modified residue" description="N6-acetyllysine; alternate" evidence="3">
    <location>
        <position position="338"/>
    </location>
</feature>
<feature type="modified residue" description="N6-succinyllysine; alternate" evidence="3">
    <location>
        <position position="338"/>
    </location>
</feature>
<feature type="modified residue" description="N6-acetyllysine" evidence="3">
    <location>
        <position position="345"/>
    </location>
</feature>
<feature type="modified residue" description="N6-acetyllysine; alternate" evidence="3">
    <location>
        <position position="363"/>
    </location>
</feature>
<feature type="modified residue" description="N6-succinyllysine; alternate" evidence="3">
    <location>
        <position position="363"/>
    </location>
</feature>
<feature type="modified residue" description="N6-acetyllysine" evidence="3">
    <location>
        <position position="364"/>
    </location>
</feature>
<feature type="modified residue" description="N6-acetyllysine" evidence="3">
    <location>
        <position position="387"/>
    </location>
</feature>
<feature type="modified residue" description="N6-acetyllysine; alternate" evidence="16">
    <location>
        <position position="396"/>
    </location>
</feature>
<feature type="modified residue" description="N6-succinyllysine; alternate" evidence="3">
    <location>
        <position position="396"/>
    </location>
</feature>
<feature type="modified residue" description="N6-acetyllysine; alternate" evidence="16">
    <location>
        <position position="404"/>
    </location>
</feature>
<feature type="modified residue" description="N6-succinyllysine; alternate" evidence="3">
    <location>
        <position position="404"/>
    </location>
</feature>
<feature type="splice variant" id="VSP_054848" description="In isoform 2." evidence="12">
    <location>
        <begin position="83"/>
        <end position="125"/>
    </location>
</feature>
<feature type="sequence variant" id="VAR_055494" description="In dbSNP:rs11558171.">
    <original>A</original>
    <variation>S</variation>
    <location>
        <position position="2"/>
    </location>
</feature>
<feature type="sequence variant" id="VAR_031710" description="In dbSNP:rs11076256.">
    <original>G</original>
    <variation>S</variation>
    <location>
        <position position="188"/>
    </location>
</feature>
<feature type="sequence variant" id="VAR_083488" description="In DEE82; uncertain significance." evidence="8">
    <location>
        <position position="209"/>
    </location>
</feature>
<feature type="sequence variant" id="VAR_083489" description="In DEE82; decreased glutamate oxaloacetate transferase activity; dbSNP:rs752927520." evidence="8">
    <original>R</original>
    <variation>G</variation>
    <location>
        <position position="262"/>
    </location>
</feature>
<feature type="sequence variant" id="VAR_083490" description="In DEE82; uncertain significance; dbSNP:rs1247507359." evidence="8">
    <original>R</original>
    <variation>G</variation>
    <location>
        <position position="337"/>
    </location>
</feature>
<feature type="sequence variant" id="VAR_031711" description="In dbSNP:rs30842." evidence="5 9 10">
    <original>V</original>
    <variation>G</variation>
    <location>
        <position position="346"/>
    </location>
</feature>
<feature type="sequence variant" id="VAR_083491" description="In DEE82; uncertain significance; decreased glutamate oxaloacetate transferase activity; dbSNP:rs1597696047." evidence="8">
    <original>G</original>
    <variation>V</variation>
    <location>
        <position position="366"/>
    </location>
</feature>
<feature type="sequence variant" id="VAR_031712" description="In dbSNP:rs17849335." evidence="6">
    <original>V</original>
    <variation>A</variation>
    <location>
        <position position="428"/>
    </location>
</feature>
<feature type="sequence conflict" description="In Ref. 6; AA sequence." evidence="13" ref="6">
    <original>AE</original>
    <variation>EA</variation>
    <location>
        <begin position="110"/>
        <end position="111"/>
    </location>
</feature>
<feature type="sequence conflict" description="In Ref. 6; AA sequence." evidence="13" ref="6">
    <original>D</original>
    <variation>N</variation>
    <location>
        <position position="255"/>
    </location>
</feature>
<feature type="sequence conflict" description="In Ref. 3; BAD96991." evidence="13" ref="3">
    <original>A</original>
    <variation>T</variation>
    <location>
        <position position="258"/>
    </location>
</feature>
<feature type="sequence conflict" description="In Ref. 6; AA sequence." evidence="13" ref="6">
    <original>E</original>
    <variation>Q</variation>
    <location>
        <position position="305"/>
    </location>
</feature>
<feature type="turn" evidence="21">
    <location>
        <begin position="32"/>
        <end position="35"/>
    </location>
</feature>
<feature type="helix" evidence="20">
    <location>
        <begin position="43"/>
        <end position="53"/>
    </location>
</feature>
<feature type="strand" evidence="21">
    <location>
        <begin position="72"/>
        <end position="74"/>
    </location>
</feature>
<feature type="helix" evidence="20">
    <location>
        <begin position="78"/>
        <end position="88"/>
    </location>
</feature>
<feature type="turn" evidence="20">
    <location>
        <begin position="89"/>
        <end position="91"/>
    </location>
</feature>
<feature type="helix" evidence="20">
    <location>
        <begin position="103"/>
        <end position="114"/>
    </location>
</feature>
<feature type="helix" evidence="20">
    <location>
        <begin position="119"/>
        <end position="123"/>
    </location>
</feature>
<feature type="strand" evidence="20">
    <location>
        <begin position="126"/>
        <end position="132"/>
    </location>
</feature>
<feature type="helix" evidence="20">
    <location>
        <begin position="133"/>
        <end position="148"/>
    </location>
</feature>
<feature type="strand" evidence="20">
    <location>
        <begin position="153"/>
        <end position="159"/>
    </location>
</feature>
<feature type="helix" evidence="20">
    <location>
        <begin position="165"/>
        <end position="172"/>
    </location>
</feature>
<feature type="strand" evidence="20">
    <location>
        <begin position="175"/>
        <end position="180"/>
    </location>
</feature>
<feature type="turn" evidence="20">
    <location>
        <begin position="184"/>
        <end position="187"/>
    </location>
</feature>
<feature type="helix" evidence="20">
    <location>
        <begin position="191"/>
        <end position="198"/>
    </location>
</feature>
<feature type="strand" evidence="20">
    <location>
        <begin position="206"/>
        <end position="213"/>
    </location>
</feature>
<feature type="turn" evidence="21">
    <location>
        <begin position="215"/>
        <end position="217"/>
    </location>
</feature>
<feature type="helix" evidence="20">
    <location>
        <begin position="223"/>
        <end position="236"/>
    </location>
</feature>
<feature type="strand" evidence="20">
    <location>
        <begin position="239"/>
        <end position="246"/>
    </location>
</feature>
<feature type="turn" evidence="20">
    <location>
        <begin position="247"/>
        <end position="251"/>
    </location>
</feature>
<feature type="helix" evidence="20">
    <location>
        <begin position="254"/>
        <end position="257"/>
    </location>
</feature>
<feature type="helix" evidence="20">
    <location>
        <begin position="259"/>
        <end position="266"/>
    </location>
</feature>
<feature type="strand" evidence="20">
    <location>
        <begin position="272"/>
        <end position="276"/>
    </location>
</feature>
<feature type="turn" evidence="20">
    <location>
        <begin position="278"/>
        <end position="280"/>
    </location>
</feature>
<feature type="turn" evidence="20">
    <location>
        <begin position="284"/>
        <end position="287"/>
    </location>
</feature>
<feature type="strand" evidence="20">
    <location>
        <begin position="288"/>
        <end position="294"/>
    </location>
</feature>
<feature type="helix" evidence="20">
    <location>
        <begin position="298"/>
        <end position="315"/>
    </location>
</feature>
<feature type="strand" evidence="20">
    <location>
        <begin position="316"/>
        <end position="318"/>
    </location>
</feature>
<feature type="helix" evidence="20">
    <location>
        <begin position="321"/>
        <end position="332"/>
    </location>
</feature>
<feature type="helix" evidence="20">
    <location>
        <begin position="334"/>
        <end position="364"/>
    </location>
</feature>
<feature type="helix" evidence="20">
    <location>
        <begin position="372"/>
        <end position="376"/>
    </location>
</feature>
<feature type="strand" evidence="20">
    <location>
        <begin position="379"/>
        <end position="383"/>
    </location>
</feature>
<feature type="helix" evidence="20">
    <location>
        <begin position="388"/>
        <end position="398"/>
    </location>
</feature>
<feature type="strand" evidence="20">
    <location>
        <begin position="406"/>
        <end position="409"/>
    </location>
</feature>
<feature type="helix" evidence="20">
    <location>
        <begin position="410"/>
        <end position="412"/>
    </location>
</feature>
<feature type="helix" evidence="20">
    <location>
        <begin position="415"/>
        <end position="428"/>
    </location>
</feature>
<keyword id="KW-0002">3D-structure</keyword>
<keyword id="KW-0007">Acetylation</keyword>
<keyword id="KW-0025">Alternative splicing</keyword>
<keyword id="KW-0032">Aminotransferase</keyword>
<keyword id="KW-1003">Cell membrane</keyword>
<keyword id="KW-0903">Direct protein sequencing</keyword>
<keyword id="KW-0225">Disease variant</keyword>
<keyword id="KW-0887">Epilepsy</keyword>
<keyword id="KW-0445">Lipid transport</keyword>
<keyword id="KW-0472">Membrane</keyword>
<keyword id="KW-0488">Methylation</keyword>
<keyword id="KW-0496">Mitochondrion</keyword>
<keyword id="KW-0944">Nitration</keyword>
<keyword id="KW-0597">Phosphoprotein</keyword>
<keyword id="KW-1267">Proteomics identification</keyword>
<keyword id="KW-0663">Pyridoxal phosphate</keyword>
<keyword id="KW-1185">Reference proteome</keyword>
<keyword id="KW-0808">Transferase</keyword>
<keyword id="KW-0809">Transit peptide</keyword>
<keyword id="KW-0813">Transport</keyword>
<proteinExistence type="evidence at protein level"/>
<evidence type="ECO:0000250" key="1"/>
<evidence type="ECO:0000250" key="2">
    <source>
        <dbReference type="UniProtKB" id="P00507"/>
    </source>
</evidence>
<evidence type="ECO:0000250" key="3">
    <source>
        <dbReference type="UniProtKB" id="P05202"/>
    </source>
</evidence>
<evidence type="ECO:0000250" key="4">
    <source>
        <dbReference type="UniProtKB" id="P12344"/>
    </source>
</evidence>
<evidence type="ECO:0000269" key="5">
    <source>
    </source>
</evidence>
<evidence type="ECO:0000269" key="6">
    <source>
    </source>
</evidence>
<evidence type="ECO:0000269" key="7">
    <source>
    </source>
</evidence>
<evidence type="ECO:0000269" key="8">
    <source>
    </source>
</evidence>
<evidence type="ECO:0000269" key="9">
    <source>
    </source>
</evidence>
<evidence type="ECO:0000269" key="10">
    <source>
    </source>
</evidence>
<evidence type="ECO:0000269" key="11">
    <source>
    </source>
</evidence>
<evidence type="ECO:0000303" key="12">
    <source>
    </source>
</evidence>
<evidence type="ECO:0000305" key="13"/>
<evidence type="ECO:0000312" key="14">
    <source>
        <dbReference type="HGNC" id="HGNC:4433"/>
    </source>
</evidence>
<evidence type="ECO:0007744" key="15">
    <source>
        <dbReference type="PDB" id="5AX8"/>
    </source>
</evidence>
<evidence type="ECO:0007744" key="16">
    <source>
    </source>
</evidence>
<evidence type="ECO:0007744" key="17">
    <source>
    </source>
</evidence>
<evidence type="ECO:0007744" key="18">
    <source>
    </source>
</evidence>
<evidence type="ECO:0007744" key="19">
    <source>
    </source>
</evidence>
<evidence type="ECO:0007829" key="20">
    <source>
        <dbReference type="PDB" id="5AX8"/>
    </source>
</evidence>
<evidence type="ECO:0007829" key="21">
    <source>
        <dbReference type="PDB" id="8SKR"/>
    </source>
</evidence>
<protein>
    <recommendedName>
        <fullName>Aspartate aminotransferase, mitochondrial</fullName>
        <shortName>mAspAT</shortName>
        <ecNumber evidence="7 8">2.6.1.1</ecNumber>
        <ecNumber evidence="2">2.6.1.7</ecNumber>
    </recommendedName>
    <alternativeName>
        <fullName>Fatty acid-binding protein</fullName>
        <shortName>FABP-1</shortName>
    </alternativeName>
    <alternativeName>
        <fullName>Glutamate oxaloacetate transaminase 2</fullName>
    </alternativeName>
    <alternativeName>
        <fullName>Kynurenine aminotransferase 4</fullName>
    </alternativeName>
    <alternativeName>
        <fullName>Kynurenine aminotransferase IV</fullName>
    </alternativeName>
    <alternativeName>
        <fullName>Kynurenine--oxoglutarate transaminase 4</fullName>
    </alternativeName>
    <alternativeName>
        <fullName>Kynurenine--oxoglutarate transaminase IV</fullName>
    </alternativeName>
    <alternativeName>
        <fullName>Plasma membrane-associated fatty acid-binding protein</fullName>
        <shortName>FABPpm</shortName>
    </alternativeName>
    <alternativeName>
        <fullName>Transaminase A</fullName>
    </alternativeName>
</protein>
<name>AATM_HUMAN</name>
<organism>
    <name type="scientific">Homo sapiens</name>
    <name type="common">Human</name>
    <dbReference type="NCBI Taxonomy" id="9606"/>
    <lineage>
        <taxon>Eukaryota</taxon>
        <taxon>Metazoa</taxon>
        <taxon>Chordata</taxon>
        <taxon>Craniata</taxon>
        <taxon>Vertebrata</taxon>
        <taxon>Euteleostomi</taxon>
        <taxon>Mammalia</taxon>
        <taxon>Eutheria</taxon>
        <taxon>Euarchontoglires</taxon>
        <taxon>Primates</taxon>
        <taxon>Haplorrhini</taxon>
        <taxon>Catarrhini</taxon>
        <taxon>Hominidae</taxon>
        <taxon>Homo</taxon>
    </lineage>
</organism>
<dbReference type="EC" id="2.6.1.1" evidence="7 8"/>
<dbReference type="EC" id="2.6.1.7" evidence="2"/>
<dbReference type="EMBL" id="M22632">
    <property type="protein sequence ID" value="AAA35568.1"/>
    <property type="molecule type" value="mRNA"/>
</dbReference>
<dbReference type="EMBL" id="AK295993">
    <property type="protein sequence ID" value="BAG58768.1"/>
    <property type="molecule type" value="mRNA"/>
</dbReference>
<dbReference type="EMBL" id="AK223271">
    <property type="protein sequence ID" value="BAD96991.1"/>
    <property type="molecule type" value="mRNA"/>
</dbReference>
<dbReference type="EMBL" id="AC012183">
    <property type="status" value="NOT_ANNOTATED_CDS"/>
    <property type="molecule type" value="Genomic_DNA"/>
</dbReference>
<dbReference type="EMBL" id="BC000525">
    <property type="protein sequence ID" value="AAH00525.1"/>
    <property type="molecule type" value="mRNA"/>
</dbReference>
<dbReference type="CCDS" id="CCDS10801.1">
    <molecule id="P00505-1"/>
</dbReference>
<dbReference type="CCDS" id="CCDS67045.1">
    <molecule id="P00505-2"/>
</dbReference>
<dbReference type="PIR" id="A31873">
    <property type="entry name" value="XNHUDM"/>
</dbReference>
<dbReference type="RefSeq" id="NP_001273149.1">
    <molecule id="P00505-2"/>
    <property type="nucleotide sequence ID" value="NM_001286220.2"/>
</dbReference>
<dbReference type="RefSeq" id="NP_002071.2">
    <molecule id="P00505-1"/>
    <property type="nucleotide sequence ID" value="NM_002080.4"/>
</dbReference>
<dbReference type="PDB" id="5AX8">
    <property type="method" value="X-ray"/>
    <property type="resolution" value="2.99 A"/>
    <property type="chains" value="A/B/C/D=30-430"/>
</dbReference>
<dbReference type="PDB" id="8SKR">
    <property type="method" value="EM"/>
    <property type="resolution" value="2.99 A"/>
    <property type="chains" value="A/C=1-430"/>
</dbReference>
<dbReference type="PDBsum" id="5AX8"/>
<dbReference type="PDBsum" id="8SKR"/>
<dbReference type="EMDB" id="EMD-40565"/>
<dbReference type="SMR" id="P00505"/>
<dbReference type="BioGRID" id="109068">
    <property type="interactions" value="119"/>
</dbReference>
<dbReference type="FunCoup" id="P00505">
    <property type="interactions" value="1960"/>
</dbReference>
<dbReference type="IntAct" id="P00505">
    <property type="interactions" value="31"/>
</dbReference>
<dbReference type="MINT" id="P00505"/>
<dbReference type="STRING" id="9606.ENSP00000245206"/>
<dbReference type="BindingDB" id="P00505"/>
<dbReference type="ChEMBL" id="CHEMBL4524033"/>
<dbReference type="DrugBank" id="DB02783">
    <property type="generic name" value="4'-Deoxy-4'-Acetylyamino-Pyridoxal-5'-Phosphate"/>
</dbReference>
<dbReference type="DrugBank" id="DB00128">
    <property type="generic name" value="Aspartic acid"/>
</dbReference>
<dbReference type="DrugBank" id="DB00151">
    <property type="generic name" value="Cysteine"/>
</dbReference>
<dbReference type="DrugBank" id="DB00142">
    <property type="generic name" value="Glutamic acid"/>
</dbReference>
<dbReference type="DrugBank" id="DB00114">
    <property type="generic name" value="Pyridoxal phosphate"/>
</dbReference>
<dbReference type="DrugCentral" id="P00505"/>
<dbReference type="TCDB" id="9.A.70.1.1">
    <property type="family name" value="the aspartate amino transferase (aat) family"/>
</dbReference>
<dbReference type="GlyGen" id="P00505">
    <property type="glycosylation" value="1 site, 1 O-linked glycan (1 site)"/>
</dbReference>
<dbReference type="iPTMnet" id="P00505"/>
<dbReference type="MetOSite" id="P00505"/>
<dbReference type="PhosphoSitePlus" id="P00505"/>
<dbReference type="SwissPalm" id="P00505"/>
<dbReference type="BioMuta" id="GOT2"/>
<dbReference type="DMDM" id="308153643"/>
<dbReference type="CPTAC" id="CPTAC-518"/>
<dbReference type="CPTAC" id="CPTAC-519"/>
<dbReference type="jPOST" id="P00505"/>
<dbReference type="MassIVE" id="P00505"/>
<dbReference type="PaxDb" id="9606-ENSP00000245206"/>
<dbReference type="PeptideAtlas" id="P00505"/>
<dbReference type="ProteomicsDB" id="17864"/>
<dbReference type="ProteomicsDB" id="51258">
    <molecule id="P00505-1"/>
</dbReference>
<dbReference type="Pumba" id="P00505"/>
<dbReference type="TopDownProteomics" id="P00505-1">
    <molecule id="P00505-1"/>
</dbReference>
<dbReference type="Antibodypedia" id="15396">
    <property type="antibodies" value="646 antibodies from 39 providers"/>
</dbReference>
<dbReference type="DNASU" id="2806"/>
<dbReference type="Ensembl" id="ENST00000245206.10">
    <molecule id="P00505-1"/>
    <property type="protein sequence ID" value="ENSP00000245206.5"/>
    <property type="gene ID" value="ENSG00000125166.13"/>
</dbReference>
<dbReference type="Ensembl" id="ENST00000434819.2">
    <molecule id="P00505-2"/>
    <property type="protein sequence ID" value="ENSP00000394100.2"/>
    <property type="gene ID" value="ENSG00000125166.13"/>
</dbReference>
<dbReference type="GeneID" id="2806"/>
<dbReference type="KEGG" id="hsa:2806"/>
<dbReference type="MANE-Select" id="ENST00000245206.10">
    <property type="protein sequence ID" value="ENSP00000245206.5"/>
    <property type="RefSeq nucleotide sequence ID" value="NM_002080.4"/>
    <property type="RefSeq protein sequence ID" value="NP_002071.2"/>
</dbReference>
<dbReference type="UCSC" id="uc002eof.2">
    <molecule id="P00505-1"/>
    <property type="organism name" value="human"/>
</dbReference>
<dbReference type="AGR" id="HGNC:4433"/>
<dbReference type="CTD" id="2806"/>
<dbReference type="DisGeNET" id="2806"/>
<dbReference type="GeneCards" id="GOT2"/>
<dbReference type="HGNC" id="HGNC:4433">
    <property type="gene designation" value="GOT2"/>
</dbReference>
<dbReference type="HPA" id="ENSG00000125166">
    <property type="expression patterns" value="Group enriched (choroid plexus, heart muscle, liver, skeletal muscle, tongue)"/>
</dbReference>
<dbReference type="MalaCards" id="GOT2"/>
<dbReference type="MIM" id="138150">
    <property type="type" value="gene"/>
</dbReference>
<dbReference type="MIM" id="618721">
    <property type="type" value="phenotype"/>
</dbReference>
<dbReference type="neXtProt" id="NX_P00505"/>
<dbReference type="OpenTargets" id="ENSG00000125166"/>
<dbReference type="PharmGKB" id="PA28818"/>
<dbReference type="VEuPathDB" id="HostDB:ENSG00000125166"/>
<dbReference type="eggNOG" id="KOG1411">
    <property type="taxonomic scope" value="Eukaryota"/>
</dbReference>
<dbReference type="GeneTree" id="ENSGT00950000183082"/>
<dbReference type="HOGENOM" id="CLU_032440_1_2_1"/>
<dbReference type="InParanoid" id="P00505"/>
<dbReference type="OMA" id="VGACTIV"/>
<dbReference type="OrthoDB" id="6752799at2759"/>
<dbReference type="PAN-GO" id="P00505">
    <property type="GO annotations" value="3 GO annotations based on evolutionary models"/>
</dbReference>
<dbReference type="PhylomeDB" id="P00505"/>
<dbReference type="TreeFam" id="TF300641"/>
<dbReference type="BioCyc" id="MetaCyc:HS04858-MONOMER"/>
<dbReference type="BRENDA" id="2.6.1.1">
    <property type="organism ID" value="2681"/>
</dbReference>
<dbReference type="PathwayCommons" id="P00505"/>
<dbReference type="Reactome" id="R-HSA-1614558">
    <property type="pathway name" value="Degradation of cysteine and homocysteine"/>
</dbReference>
<dbReference type="Reactome" id="R-HSA-389661">
    <property type="pathway name" value="Glyoxylate metabolism and glycine degradation"/>
</dbReference>
<dbReference type="Reactome" id="R-HSA-8963693">
    <property type="pathway name" value="Aspartate and asparagine metabolism"/>
</dbReference>
<dbReference type="Reactome" id="R-HSA-8964539">
    <property type="pathway name" value="Glutamate and glutamine metabolism"/>
</dbReference>
<dbReference type="Reactome" id="R-HSA-9856872">
    <property type="pathway name" value="Malate-aspartate shuttle"/>
</dbReference>
<dbReference type="SignaLink" id="P00505"/>
<dbReference type="SIGNOR" id="P00505"/>
<dbReference type="BioGRID-ORCS" id="2806">
    <property type="hits" value="155 hits in 1161 CRISPR screens"/>
</dbReference>
<dbReference type="CD-CODE" id="91857CE7">
    <property type="entry name" value="Nucleolus"/>
</dbReference>
<dbReference type="CD-CODE" id="FB4E32DD">
    <property type="entry name" value="Presynaptic clusters and postsynaptic densities"/>
</dbReference>
<dbReference type="ChiTaRS" id="GOT2">
    <property type="organism name" value="human"/>
</dbReference>
<dbReference type="GeneWiki" id="GOT2"/>
<dbReference type="GenomeRNAi" id="2806"/>
<dbReference type="Pharos" id="P00505">
    <property type="development level" value="Tbio"/>
</dbReference>
<dbReference type="PRO" id="PR:P00505"/>
<dbReference type="Proteomes" id="UP000005640">
    <property type="component" value="Chromosome 16"/>
</dbReference>
<dbReference type="RNAct" id="P00505">
    <property type="molecule type" value="protein"/>
</dbReference>
<dbReference type="Bgee" id="ENSG00000125166">
    <property type="expression patterns" value="Expressed in hindlimb stylopod muscle and 205 other cell types or tissues"/>
</dbReference>
<dbReference type="ExpressionAtlas" id="P00505">
    <property type="expression patterns" value="baseline and differential"/>
</dbReference>
<dbReference type="GO" id="GO:0070062">
    <property type="term" value="C:extracellular exosome"/>
    <property type="evidence" value="ECO:0007005"/>
    <property type="project" value="UniProtKB"/>
</dbReference>
<dbReference type="GO" id="GO:0005759">
    <property type="term" value="C:mitochondrial matrix"/>
    <property type="evidence" value="ECO:0000304"/>
    <property type="project" value="Reactome"/>
</dbReference>
<dbReference type="GO" id="GO:0005739">
    <property type="term" value="C:mitochondrion"/>
    <property type="evidence" value="ECO:0000314"/>
    <property type="project" value="UniProtKB"/>
</dbReference>
<dbReference type="GO" id="GO:0005886">
    <property type="term" value="C:plasma membrane"/>
    <property type="evidence" value="ECO:0000314"/>
    <property type="project" value="UniProtKB"/>
</dbReference>
<dbReference type="GO" id="GO:0016212">
    <property type="term" value="F:kynurenine-oxoglutarate transaminase activity"/>
    <property type="evidence" value="ECO:0007669"/>
    <property type="project" value="UniProtKB-EC"/>
</dbReference>
<dbReference type="GO" id="GO:0004069">
    <property type="term" value="F:L-aspartate:2-oxoglutarate aminotransferase activity"/>
    <property type="evidence" value="ECO:0000314"/>
    <property type="project" value="UniProtKB"/>
</dbReference>
<dbReference type="GO" id="GO:0030170">
    <property type="term" value="F:pyridoxal phosphate binding"/>
    <property type="evidence" value="ECO:0007669"/>
    <property type="project" value="InterPro"/>
</dbReference>
<dbReference type="GO" id="GO:0003723">
    <property type="term" value="F:RNA binding"/>
    <property type="evidence" value="ECO:0007005"/>
    <property type="project" value="UniProtKB"/>
</dbReference>
<dbReference type="GO" id="GO:0006103">
    <property type="term" value="P:2-oxoglutarate metabolic process"/>
    <property type="evidence" value="ECO:0000250"/>
    <property type="project" value="UniProtKB"/>
</dbReference>
<dbReference type="GO" id="GO:0019470">
    <property type="term" value="P:4-hydroxyproline catabolic process"/>
    <property type="evidence" value="ECO:0000304"/>
    <property type="project" value="BHF-UCL"/>
</dbReference>
<dbReference type="GO" id="GO:0006532">
    <property type="term" value="P:aspartate biosynthetic process"/>
    <property type="evidence" value="ECO:0007669"/>
    <property type="project" value="Ensembl"/>
</dbReference>
<dbReference type="GO" id="GO:0006533">
    <property type="term" value="P:aspartate catabolic process"/>
    <property type="evidence" value="ECO:0000314"/>
    <property type="project" value="UniProtKB"/>
</dbReference>
<dbReference type="GO" id="GO:0006531">
    <property type="term" value="P:aspartate metabolic process"/>
    <property type="evidence" value="ECO:0000250"/>
    <property type="project" value="UniProtKB"/>
</dbReference>
<dbReference type="GO" id="GO:0015908">
    <property type="term" value="P:fatty acid transport"/>
    <property type="evidence" value="ECO:0000270"/>
    <property type="project" value="UniProtKB"/>
</dbReference>
<dbReference type="GO" id="GO:0019550">
    <property type="term" value="P:glutamate catabolic process to aspartate"/>
    <property type="evidence" value="ECO:0007669"/>
    <property type="project" value="Ensembl"/>
</dbReference>
<dbReference type="GO" id="GO:0006536">
    <property type="term" value="P:glutamate metabolic process"/>
    <property type="evidence" value="ECO:0000250"/>
    <property type="project" value="UniProtKB"/>
</dbReference>
<dbReference type="GO" id="GO:0043490">
    <property type="term" value="P:malate-aspartate shuttle"/>
    <property type="evidence" value="ECO:0000315"/>
    <property type="project" value="FlyBase"/>
</dbReference>
<dbReference type="GO" id="GO:0006107">
    <property type="term" value="P:oxaloacetate metabolic process"/>
    <property type="evidence" value="ECO:0007669"/>
    <property type="project" value="Ensembl"/>
</dbReference>
<dbReference type="GO" id="GO:0045471">
    <property type="term" value="P:response to ethanol"/>
    <property type="evidence" value="ECO:0000314"/>
    <property type="project" value="UniProtKB"/>
</dbReference>
<dbReference type="CDD" id="cd00609">
    <property type="entry name" value="AAT_like"/>
    <property type="match status" value="1"/>
</dbReference>
<dbReference type="FunFam" id="3.40.640.10:FF:000026">
    <property type="entry name" value="Aspartate aminotransferase"/>
    <property type="match status" value="1"/>
</dbReference>
<dbReference type="FunFam" id="3.90.1150.10:FF:000001">
    <property type="entry name" value="Aspartate aminotransferase"/>
    <property type="match status" value="1"/>
</dbReference>
<dbReference type="FunFam" id="3.90.1150.10:FF:000160">
    <property type="entry name" value="Similar to aspartate aminotransferase"/>
    <property type="match status" value="1"/>
</dbReference>
<dbReference type="Gene3D" id="3.90.1150.10">
    <property type="entry name" value="Aspartate Aminotransferase, domain 1"/>
    <property type="match status" value="1"/>
</dbReference>
<dbReference type="Gene3D" id="3.40.640.10">
    <property type="entry name" value="Type I PLP-dependent aspartate aminotransferase-like (Major domain)"/>
    <property type="match status" value="1"/>
</dbReference>
<dbReference type="InterPro" id="IPR004839">
    <property type="entry name" value="Aminotransferase_I/II_large"/>
</dbReference>
<dbReference type="InterPro" id="IPR000796">
    <property type="entry name" value="Asp_trans"/>
</dbReference>
<dbReference type="InterPro" id="IPR004838">
    <property type="entry name" value="NHTrfase_class1_PyrdxlP-BS"/>
</dbReference>
<dbReference type="InterPro" id="IPR015424">
    <property type="entry name" value="PyrdxlP-dep_Trfase"/>
</dbReference>
<dbReference type="InterPro" id="IPR015421">
    <property type="entry name" value="PyrdxlP-dep_Trfase_major"/>
</dbReference>
<dbReference type="InterPro" id="IPR015422">
    <property type="entry name" value="PyrdxlP-dep_Trfase_small"/>
</dbReference>
<dbReference type="NCBIfam" id="NF006719">
    <property type="entry name" value="PRK09257.1"/>
    <property type="match status" value="1"/>
</dbReference>
<dbReference type="PANTHER" id="PTHR11879">
    <property type="entry name" value="ASPARTATE AMINOTRANSFERASE"/>
    <property type="match status" value="1"/>
</dbReference>
<dbReference type="PANTHER" id="PTHR11879:SF39">
    <property type="entry name" value="ASPARTATE AMINOTRANSFERASE, MITOCHONDRIAL"/>
    <property type="match status" value="1"/>
</dbReference>
<dbReference type="Pfam" id="PF00155">
    <property type="entry name" value="Aminotran_1_2"/>
    <property type="match status" value="1"/>
</dbReference>
<dbReference type="PRINTS" id="PR00799">
    <property type="entry name" value="TRANSAMINASE"/>
</dbReference>
<dbReference type="SUPFAM" id="SSF53383">
    <property type="entry name" value="PLP-dependent transferases"/>
    <property type="match status" value="1"/>
</dbReference>
<dbReference type="PROSITE" id="PS00105">
    <property type="entry name" value="AA_TRANSFER_CLASS_1"/>
    <property type="match status" value="1"/>
</dbReference>
<gene>
    <name evidence="14" type="primary">GOT2</name>
    <name evidence="14" type="synonym">KYAT4</name>
</gene>
<comment type="function">
    <text evidence="8 11">Catalyzes the irreversible transamination of the L-tryptophan metabolite L-kynurenine to form kynurenic acid (KA). As a member of the malate-aspartate shuttle, it has a key role in the intracellular NAD(H) redox balance. Is important for metabolite exchange between mitochondria and cytosol, and for amino acid metabolism. Facilitates cellular uptake of long-chain free fatty acids.</text>
</comment>
<comment type="catalytic activity">
    <reaction evidence="7 8">
        <text>L-aspartate + 2-oxoglutarate = oxaloacetate + L-glutamate</text>
        <dbReference type="Rhea" id="RHEA:21824"/>
        <dbReference type="ChEBI" id="CHEBI:16452"/>
        <dbReference type="ChEBI" id="CHEBI:16810"/>
        <dbReference type="ChEBI" id="CHEBI:29985"/>
        <dbReference type="ChEBI" id="CHEBI:29991"/>
        <dbReference type="EC" id="2.6.1.1"/>
    </reaction>
</comment>
<comment type="catalytic activity">
    <reaction evidence="2">
        <text>L-kynurenine + 2-oxoglutarate = kynurenate + L-glutamate + H2O</text>
        <dbReference type="Rhea" id="RHEA:65560"/>
        <dbReference type="ChEBI" id="CHEBI:15377"/>
        <dbReference type="ChEBI" id="CHEBI:16810"/>
        <dbReference type="ChEBI" id="CHEBI:29985"/>
        <dbReference type="ChEBI" id="CHEBI:57959"/>
        <dbReference type="ChEBI" id="CHEBI:58454"/>
        <dbReference type="EC" id="2.6.1.7"/>
    </reaction>
</comment>
<comment type="cofactor">
    <cofactor>
        <name>pyridoxal 5'-phosphate</name>
        <dbReference type="ChEBI" id="CHEBI:597326"/>
    </cofactor>
</comment>
<comment type="biophysicochemical properties">
    <phDependence>
        <text evidence="7">Optimum pH is 8.5.</text>
    </phDependence>
    <temperatureDependence>
        <text evidence="7">Optimum temperature is 47.5 degrees Celsius.</text>
    </temperatureDependence>
</comment>
<comment type="subunit">
    <text>Homodimer.</text>
</comment>
<comment type="subcellular location">
    <subcellularLocation>
        <location evidence="11">Mitochondrion matrix</location>
    </subcellularLocation>
    <subcellularLocation>
        <location evidence="11">Cell membrane</location>
    </subcellularLocation>
    <text evidence="11">Exposure to alcohol promotes translocation to the cell membrane.</text>
</comment>
<comment type="alternative products">
    <event type="alternative splicing"/>
    <isoform>
        <id>P00505-1</id>
        <name>1</name>
        <sequence type="displayed"/>
    </isoform>
    <isoform>
        <id>P00505-2</id>
        <name>2</name>
        <sequence type="described" ref="VSP_054848"/>
    </isoform>
</comment>
<comment type="induction">
    <text evidence="11">Up-regulated by long-time exposure to alcohol.</text>
</comment>
<comment type="disease" evidence="8">
    <disease id="DI-05722">
        <name>Developmental and epileptic encephalopathy 82</name>
        <acronym>DEE82</acronym>
        <description>A form of epileptic encephalopathy, a heterogeneous group of severe early-onset epilepsies characterized by refractory seizures, neurodevelopmental impairment, and poor prognosis. Development is normal prior to seizure onset, after which cognitive and motor delays become apparent. DEE82 is an autosomal recessive metabolic encephalopathy characterized by epilepsy from the first year of life, global developmental delay, hypotonia and feeding difficulties apparent soon after birth, and intellectual and motor disabilities. Other features include poor overall growth, progressive microcephaly and biochemical abnormalities, including increased serum lactate and ammonia.</description>
        <dbReference type="MIM" id="618721"/>
    </disease>
    <text>The disease is caused by variants affecting the gene represented in this entry.</text>
</comment>
<comment type="miscellaneous">
    <text>In eukaryotes there are cytoplasmic, mitochondrial and chloroplastic isozymes.</text>
</comment>
<comment type="similarity">
    <text evidence="13">Belongs to the class-I pyridoxal-phosphate-dependent aminotransferase family.</text>
</comment>
<accession>P00505</accession>
<accession>B4DJA6</accession>
<accession>E7ERW2</accession>
<accession>Q53FL3</accession>
<accession>Q9BWA3</accession>